<evidence type="ECO:0000255" key="1">
    <source>
        <dbReference type="HAMAP-Rule" id="MF_00096"/>
    </source>
</evidence>
<evidence type="ECO:0000256" key="2">
    <source>
        <dbReference type="SAM" id="MobiDB-lite"/>
    </source>
</evidence>
<feature type="chain" id="PRO_1000008082" description="DNA mismatch repair protein MutS">
    <location>
        <begin position="1"/>
        <end position="857"/>
    </location>
</feature>
<feature type="region of interest" description="Disordered" evidence="2">
    <location>
        <begin position="797"/>
        <end position="820"/>
    </location>
</feature>
<feature type="binding site" evidence="1">
    <location>
        <begin position="613"/>
        <end position="620"/>
    </location>
    <ligand>
        <name>ATP</name>
        <dbReference type="ChEBI" id="CHEBI:30616"/>
    </ligand>
</feature>
<accession>A5W816</accession>
<proteinExistence type="inferred from homology"/>
<sequence length="857" mass="95101">MSSLSDHTPMMQQYWKLKNQHPDQLMFYRMGDFYEIFYEDAKKAAKLLDITLTARGQSAGQSIPMCGIPFHSLEGYLAKLVKLGESVVICEQIGDPATSKGPVERQVVRIITPGTVSDEALLDERRDNLIAALLGDERLFGLAVLDITSGNFSVQEIKGWENLLAELERLNPVELLIPDDWPRDLPAEKRPGARRRAPWDFDRDSARKALCQQFATKDLKGFGCDKLTLAIGAAGCLLTYAKETQRTALPHLRSLRHERLDDTVILDGASRRNLELDINLAGGRDNTLQSVIDRCQTAMASRLLSRWLNRPLRDLKVLQARQDSIRCLLDSYRFEKLQPQLKEIGDIERILARIGLRNARPRDLARLRDALGALPELQNAMTELEAPHLARLAAITGTYPELASLLERAIIDNPPAVIRDGGVLKAGYDNELDELLAISENAGQFLIDLEAREKARTGLANLKVGYNRVHGYFIELPTKQAEQAPGDYIRRQTLKGAERFITPELKAFEDKALSAKSRALAREKMLYDALLETLISHLAPLQDSAAALAELDVLSNLAERALNLDLSCPRFVDEPCLRIEQGRHPVVEQVLTTPFVANDLGLDNSTRMLIITGPNMGGKSTYMRQTALIVLLAHIGSFVPAASCELSLVDRIFTRIGSSDDLAGGRSTFMVEMSETANILHNATDRSLVLMDEVGRGTSTFDGLSLAWAAAERLAQLRAYTLFATHYFELTVLPESEPLVANVHLNATEHNERIVFLHHVLPGPASQSYGLAVAQLAGVPTAVIQRAREHLGRLETTSLPHEQPAAHKAKDAPQVPHQSDLFASLPHPAIEKLGKLQLDDMTPRQAIEMLYQLKNLL</sequence>
<comment type="function">
    <text evidence="1">This protein is involved in the repair of mismatches in DNA. It is possible that it carries out the mismatch recognition step. This protein has a weak ATPase activity.</text>
</comment>
<comment type="similarity">
    <text evidence="1">Belongs to the DNA mismatch repair MutS family.</text>
</comment>
<protein>
    <recommendedName>
        <fullName evidence="1">DNA mismatch repair protein MutS</fullName>
    </recommendedName>
</protein>
<reference key="1">
    <citation type="submission" date="2007-05" db="EMBL/GenBank/DDBJ databases">
        <title>Complete sequence of Pseudomonas putida F1.</title>
        <authorList>
            <consortium name="US DOE Joint Genome Institute"/>
            <person name="Copeland A."/>
            <person name="Lucas S."/>
            <person name="Lapidus A."/>
            <person name="Barry K."/>
            <person name="Detter J.C."/>
            <person name="Glavina del Rio T."/>
            <person name="Hammon N."/>
            <person name="Israni S."/>
            <person name="Dalin E."/>
            <person name="Tice H."/>
            <person name="Pitluck S."/>
            <person name="Chain P."/>
            <person name="Malfatti S."/>
            <person name="Shin M."/>
            <person name="Vergez L."/>
            <person name="Schmutz J."/>
            <person name="Larimer F."/>
            <person name="Land M."/>
            <person name="Hauser L."/>
            <person name="Kyrpides N."/>
            <person name="Lykidis A."/>
            <person name="Parales R."/>
            <person name="Richardson P."/>
        </authorList>
    </citation>
    <scope>NUCLEOTIDE SEQUENCE [LARGE SCALE GENOMIC DNA]</scope>
    <source>
        <strain>ATCC 700007 / DSM 6899 / JCM 31910 / BCRC 17059 / LMG 24140 / F1</strain>
    </source>
</reference>
<gene>
    <name evidence="1" type="primary">mutS</name>
    <name type="ordered locus">Pput_4152</name>
</gene>
<organism>
    <name type="scientific">Pseudomonas putida (strain ATCC 700007 / DSM 6899 / JCM 31910 / BCRC 17059 / LMG 24140 / F1)</name>
    <dbReference type="NCBI Taxonomy" id="351746"/>
    <lineage>
        <taxon>Bacteria</taxon>
        <taxon>Pseudomonadati</taxon>
        <taxon>Pseudomonadota</taxon>
        <taxon>Gammaproteobacteria</taxon>
        <taxon>Pseudomonadales</taxon>
        <taxon>Pseudomonadaceae</taxon>
        <taxon>Pseudomonas</taxon>
    </lineage>
</organism>
<keyword id="KW-0067">ATP-binding</keyword>
<keyword id="KW-0227">DNA damage</keyword>
<keyword id="KW-0234">DNA repair</keyword>
<keyword id="KW-0238">DNA-binding</keyword>
<keyword id="KW-0547">Nucleotide-binding</keyword>
<name>MUTS_PSEP1</name>
<dbReference type="EMBL" id="CP000712">
    <property type="protein sequence ID" value="ABQ80276.1"/>
    <property type="molecule type" value="Genomic_DNA"/>
</dbReference>
<dbReference type="SMR" id="A5W816"/>
<dbReference type="KEGG" id="ppf:Pput_4152"/>
<dbReference type="eggNOG" id="COG0249">
    <property type="taxonomic scope" value="Bacteria"/>
</dbReference>
<dbReference type="HOGENOM" id="CLU_002472_4_0_6"/>
<dbReference type="GO" id="GO:0005829">
    <property type="term" value="C:cytosol"/>
    <property type="evidence" value="ECO:0007669"/>
    <property type="project" value="TreeGrafter"/>
</dbReference>
<dbReference type="GO" id="GO:0005524">
    <property type="term" value="F:ATP binding"/>
    <property type="evidence" value="ECO:0007669"/>
    <property type="project" value="UniProtKB-UniRule"/>
</dbReference>
<dbReference type="GO" id="GO:0140664">
    <property type="term" value="F:ATP-dependent DNA damage sensor activity"/>
    <property type="evidence" value="ECO:0007669"/>
    <property type="project" value="InterPro"/>
</dbReference>
<dbReference type="GO" id="GO:0003684">
    <property type="term" value="F:damaged DNA binding"/>
    <property type="evidence" value="ECO:0007669"/>
    <property type="project" value="UniProtKB-UniRule"/>
</dbReference>
<dbReference type="GO" id="GO:0030983">
    <property type="term" value="F:mismatched DNA binding"/>
    <property type="evidence" value="ECO:0007669"/>
    <property type="project" value="InterPro"/>
</dbReference>
<dbReference type="GO" id="GO:0006298">
    <property type="term" value="P:mismatch repair"/>
    <property type="evidence" value="ECO:0007669"/>
    <property type="project" value="UniProtKB-UniRule"/>
</dbReference>
<dbReference type="CDD" id="cd03284">
    <property type="entry name" value="ABC_MutS1"/>
    <property type="match status" value="1"/>
</dbReference>
<dbReference type="FunFam" id="1.10.1420.10:FF:000002">
    <property type="entry name" value="DNA mismatch repair protein MutS"/>
    <property type="match status" value="1"/>
</dbReference>
<dbReference type="FunFam" id="3.40.1170.10:FF:000001">
    <property type="entry name" value="DNA mismatch repair protein MutS"/>
    <property type="match status" value="1"/>
</dbReference>
<dbReference type="FunFam" id="3.40.50.300:FF:000283">
    <property type="entry name" value="DNA mismatch repair protein MutS"/>
    <property type="match status" value="1"/>
</dbReference>
<dbReference type="Gene3D" id="1.10.1420.10">
    <property type="match status" value="2"/>
</dbReference>
<dbReference type="Gene3D" id="6.10.140.430">
    <property type="match status" value="1"/>
</dbReference>
<dbReference type="Gene3D" id="3.40.1170.10">
    <property type="entry name" value="DNA repair protein MutS, domain I"/>
    <property type="match status" value="1"/>
</dbReference>
<dbReference type="Gene3D" id="3.30.420.110">
    <property type="entry name" value="MutS, connector domain"/>
    <property type="match status" value="1"/>
</dbReference>
<dbReference type="Gene3D" id="3.40.50.300">
    <property type="entry name" value="P-loop containing nucleotide triphosphate hydrolases"/>
    <property type="match status" value="1"/>
</dbReference>
<dbReference type="HAMAP" id="MF_00096">
    <property type="entry name" value="MutS"/>
    <property type="match status" value="1"/>
</dbReference>
<dbReference type="InterPro" id="IPR005748">
    <property type="entry name" value="DNA_mismatch_repair_MutS"/>
</dbReference>
<dbReference type="InterPro" id="IPR007695">
    <property type="entry name" value="DNA_mismatch_repair_MutS-lik_N"/>
</dbReference>
<dbReference type="InterPro" id="IPR017261">
    <property type="entry name" value="DNA_mismatch_repair_MutS/MSH"/>
</dbReference>
<dbReference type="InterPro" id="IPR000432">
    <property type="entry name" value="DNA_mismatch_repair_MutS_C"/>
</dbReference>
<dbReference type="InterPro" id="IPR007861">
    <property type="entry name" value="DNA_mismatch_repair_MutS_clamp"/>
</dbReference>
<dbReference type="InterPro" id="IPR007696">
    <property type="entry name" value="DNA_mismatch_repair_MutS_core"/>
</dbReference>
<dbReference type="InterPro" id="IPR016151">
    <property type="entry name" value="DNA_mismatch_repair_MutS_N"/>
</dbReference>
<dbReference type="InterPro" id="IPR036187">
    <property type="entry name" value="DNA_mismatch_repair_MutS_sf"/>
</dbReference>
<dbReference type="InterPro" id="IPR007860">
    <property type="entry name" value="DNA_mmatch_repair_MutS_con_dom"/>
</dbReference>
<dbReference type="InterPro" id="IPR045076">
    <property type="entry name" value="MutS"/>
</dbReference>
<dbReference type="InterPro" id="IPR036678">
    <property type="entry name" value="MutS_con_dom_sf"/>
</dbReference>
<dbReference type="InterPro" id="IPR027417">
    <property type="entry name" value="P-loop_NTPase"/>
</dbReference>
<dbReference type="NCBIfam" id="TIGR01070">
    <property type="entry name" value="mutS1"/>
    <property type="match status" value="1"/>
</dbReference>
<dbReference type="NCBIfam" id="NF003810">
    <property type="entry name" value="PRK05399.1"/>
    <property type="match status" value="1"/>
</dbReference>
<dbReference type="PANTHER" id="PTHR11361:SF34">
    <property type="entry name" value="DNA MISMATCH REPAIR PROTEIN MSH1, MITOCHONDRIAL"/>
    <property type="match status" value="1"/>
</dbReference>
<dbReference type="PANTHER" id="PTHR11361">
    <property type="entry name" value="DNA MISMATCH REPAIR PROTEIN MUTS FAMILY MEMBER"/>
    <property type="match status" value="1"/>
</dbReference>
<dbReference type="Pfam" id="PF01624">
    <property type="entry name" value="MutS_I"/>
    <property type="match status" value="1"/>
</dbReference>
<dbReference type="Pfam" id="PF05188">
    <property type="entry name" value="MutS_II"/>
    <property type="match status" value="1"/>
</dbReference>
<dbReference type="Pfam" id="PF05192">
    <property type="entry name" value="MutS_III"/>
    <property type="match status" value="1"/>
</dbReference>
<dbReference type="Pfam" id="PF05190">
    <property type="entry name" value="MutS_IV"/>
    <property type="match status" value="1"/>
</dbReference>
<dbReference type="Pfam" id="PF00488">
    <property type="entry name" value="MutS_V"/>
    <property type="match status" value="1"/>
</dbReference>
<dbReference type="PIRSF" id="PIRSF037677">
    <property type="entry name" value="DNA_mis_repair_Msh6"/>
    <property type="match status" value="1"/>
</dbReference>
<dbReference type="SMART" id="SM00534">
    <property type="entry name" value="MUTSac"/>
    <property type="match status" value="1"/>
</dbReference>
<dbReference type="SMART" id="SM00533">
    <property type="entry name" value="MUTSd"/>
    <property type="match status" value="1"/>
</dbReference>
<dbReference type="SUPFAM" id="SSF55271">
    <property type="entry name" value="DNA repair protein MutS, domain I"/>
    <property type="match status" value="1"/>
</dbReference>
<dbReference type="SUPFAM" id="SSF53150">
    <property type="entry name" value="DNA repair protein MutS, domain II"/>
    <property type="match status" value="1"/>
</dbReference>
<dbReference type="SUPFAM" id="SSF48334">
    <property type="entry name" value="DNA repair protein MutS, domain III"/>
    <property type="match status" value="1"/>
</dbReference>
<dbReference type="SUPFAM" id="SSF52540">
    <property type="entry name" value="P-loop containing nucleoside triphosphate hydrolases"/>
    <property type="match status" value="1"/>
</dbReference>
<dbReference type="PROSITE" id="PS00486">
    <property type="entry name" value="DNA_MISMATCH_REPAIR_2"/>
    <property type="match status" value="1"/>
</dbReference>